<proteinExistence type="evidence at protein level"/>
<accession>Q74SQ6</accession>
<accession>Q8D0Z9</accession>
<feature type="signal peptide" evidence="1">
    <location>
        <begin position="1"/>
        <end position="21"/>
    </location>
</feature>
<feature type="chain" id="PRO_0000353999" description="Membrane-bound lytic murein transglycosylase F">
    <location>
        <begin position="22"/>
        <end position="486"/>
    </location>
</feature>
<feature type="region of interest" description="Non-LT domain" evidence="1">
    <location>
        <begin position="22"/>
        <end position="268"/>
    </location>
</feature>
<feature type="region of interest" description="LT domain" evidence="1">
    <location>
        <begin position="269"/>
        <end position="486"/>
    </location>
</feature>
<feature type="active site" evidence="1">
    <location>
        <position position="313"/>
    </location>
</feature>
<feature type="helix" evidence="3">
    <location>
        <begin position="35"/>
        <end position="42"/>
    </location>
</feature>
<feature type="strand" evidence="3">
    <location>
        <begin position="44"/>
        <end position="50"/>
    </location>
</feature>
<feature type="turn" evidence="3">
    <location>
        <begin position="53"/>
        <end position="55"/>
    </location>
</feature>
<feature type="strand" evidence="3">
    <location>
        <begin position="59"/>
        <end position="62"/>
    </location>
</feature>
<feature type="helix" evidence="3">
    <location>
        <begin position="66"/>
        <end position="78"/>
    </location>
</feature>
<feature type="strand" evidence="3">
    <location>
        <begin position="80"/>
        <end position="88"/>
    </location>
</feature>
<feature type="helix" evidence="3">
    <location>
        <begin position="90"/>
        <end position="98"/>
    </location>
</feature>
<feature type="strand" evidence="3">
    <location>
        <begin position="103"/>
        <end position="105"/>
    </location>
</feature>
<feature type="helix" evidence="3">
    <location>
        <begin position="113"/>
        <end position="117"/>
    </location>
</feature>
<feature type="strand" evidence="3">
    <location>
        <begin position="119"/>
        <end position="128"/>
    </location>
</feature>
<feature type="strand" evidence="3">
    <location>
        <begin position="130"/>
        <end position="135"/>
    </location>
</feature>
<feature type="strand" evidence="3">
    <location>
        <begin position="151"/>
        <end position="154"/>
    </location>
</feature>
<feature type="helix" evidence="3">
    <location>
        <begin position="158"/>
        <end position="168"/>
    </location>
</feature>
<feature type="strand" evidence="3">
    <location>
        <begin position="176"/>
        <end position="181"/>
    </location>
</feature>
<feature type="helix" evidence="3">
    <location>
        <begin position="184"/>
        <end position="192"/>
    </location>
</feature>
<feature type="strand" evidence="3">
    <location>
        <begin position="195"/>
        <end position="202"/>
    </location>
</feature>
<feature type="helix" evidence="3">
    <location>
        <begin position="203"/>
        <end position="210"/>
    </location>
</feature>
<feature type="strand" evidence="3">
    <location>
        <begin position="216"/>
        <end position="221"/>
    </location>
</feature>
<feature type="strand" evidence="3">
    <location>
        <begin position="226"/>
        <end position="233"/>
    </location>
</feature>
<feature type="helix" evidence="3">
    <location>
        <begin position="239"/>
        <end position="253"/>
    </location>
</feature>
<feature type="helix" evidence="3">
    <location>
        <begin position="256"/>
        <end position="263"/>
    </location>
</feature>
<sequence length="486" mass="54808">MTRIKLSYFTIGLVALLLALALWPNIPWRNGQEGQLDQIKARGELRVSTISSPLIYSTEKDTPSGFDYELAKRFADYLGVKLVIIPHHNIDDLFDALDNDDTDLLAAGLIYNRERLNRARTGPAYYSVSQQLVYRLGSPRPKSFSDLKGQVVVASGSAHMTTLKRLKQTKYPELNWSSSVDKSGKELLEQVAEGKLDYTLGDSATIALLQRIHPQLAVAFDVTDEEPVTWYFKQSDDDSLYAAMLDFYSEMVEDGSLARLEEKYLGHVGSFDYVDTKTFLSAIDNVLPSYQHLFEKHAGDIDWKLLAVIAYQESHWNPQATSPTGVRGLMMLTRATADGLGVKDRVDPEESIRGGAIYLQRLMKKLPETIPEDERIWFALAAYNLGYGHMLDARRLTKNQNGNPDSWVDVKMRLPMLSQKRYYPSTTYGYARGHEAYNYVENIRRYQVSLVGYLQEKEKKAAQHAAIEAELGKSNPVVGPGWSIGD</sequence>
<evidence type="ECO:0000255" key="1">
    <source>
        <dbReference type="HAMAP-Rule" id="MF_02016"/>
    </source>
</evidence>
<evidence type="ECO:0000305" key="2"/>
<evidence type="ECO:0007829" key="3">
    <source>
        <dbReference type="PDB" id="5UH0"/>
    </source>
</evidence>
<dbReference type="EC" id="4.2.2.n1" evidence="1"/>
<dbReference type="EMBL" id="AL590842">
    <property type="protein sequence ID" value="CAL21530.1"/>
    <property type="molecule type" value="Genomic_DNA"/>
</dbReference>
<dbReference type="EMBL" id="AE009952">
    <property type="protein sequence ID" value="AAM84882.1"/>
    <property type="status" value="ALT_INIT"/>
    <property type="molecule type" value="Genomic_DNA"/>
</dbReference>
<dbReference type="EMBL" id="AE017042">
    <property type="protein sequence ID" value="AAS62732.1"/>
    <property type="molecule type" value="Genomic_DNA"/>
</dbReference>
<dbReference type="PIR" id="AG0355">
    <property type="entry name" value="AG0355"/>
</dbReference>
<dbReference type="RefSeq" id="WP_002211562.1">
    <property type="nucleotide sequence ID" value="NZ_WUCL01000098.1"/>
</dbReference>
<dbReference type="RefSeq" id="YP_002347852.1">
    <property type="nucleotide sequence ID" value="NC_003143.1"/>
</dbReference>
<dbReference type="PDB" id="5UH0">
    <property type="method" value="X-ray"/>
    <property type="resolution" value="1.95 A"/>
    <property type="chains" value="A/B=35-274"/>
</dbReference>
<dbReference type="PDBsum" id="5UH0"/>
<dbReference type="SMR" id="Q74SQ6"/>
<dbReference type="IntAct" id="Q74SQ6">
    <property type="interactions" value="1"/>
</dbReference>
<dbReference type="STRING" id="214092.YPO2922"/>
<dbReference type="PaxDb" id="214092-YPO2922"/>
<dbReference type="DNASU" id="1146255"/>
<dbReference type="EnsemblBacteria" id="AAS62732">
    <property type="protein sequence ID" value="AAS62732"/>
    <property type="gene ID" value="YP_2535"/>
</dbReference>
<dbReference type="GeneID" id="57975876"/>
<dbReference type="KEGG" id="ype:YPO2922"/>
<dbReference type="KEGG" id="ypk:y1308"/>
<dbReference type="KEGG" id="ypm:YP_2535"/>
<dbReference type="PATRIC" id="fig|214092.21.peg.3373"/>
<dbReference type="eggNOG" id="COG4623">
    <property type="taxonomic scope" value="Bacteria"/>
</dbReference>
<dbReference type="HOGENOM" id="CLU_027494_0_1_6"/>
<dbReference type="OMA" id="YYDILTW"/>
<dbReference type="OrthoDB" id="9815002at2"/>
<dbReference type="Proteomes" id="UP000000815">
    <property type="component" value="Chromosome"/>
</dbReference>
<dbReference type="Proteomes" id="UP000001019">
    <property type="component" value="Chromosome"/>
</dbReference>
<dbReference type="Proteomes" id="UP000002490">
    <property type="component" value="Chromosome"/>
</dbReference>
<dbReference type="GO" id="GO:0009279">
    <property type="term" value="C:cell outer membrane"/>
    <property type="evidence" value="ECO:0000318"/>
    <property type="project" value="GO_Central"/>
</dbReference>
<dbReference type="GO" id="GO:0008933">
    <property type="term" value="F:peptidoglycan lytic transglycosylase activity"/>
    <property type="evidence" value="ECO:0000318"/>
    <property type="project" value="GO_Central"/>
</dbReference>
<dbReference type="GO" id="GO:0016998">
    <property type="term" value="P:cell wall macromolecule catabolic process"/>
    <property type="evidence" value="ECO:0007669"/>
    <property type="project" value="UniProtKB-UniRule"/>
</dbReference>
<dbReference type="GO" id="GO:0071555">
    <property type="term" value="P:cell wall organization"/>
    <property type="evidence" value="ECO:0007669"/>
    <property type="project" value="UniProtKB-KW"/>
</dbReference>
<dbReference type="GO" id="GO:0009253">
    <property type="term" value="P:peptidoglycan catabolic process"/>
    <property type="evidence" value="ECO:0000318"/>
    <property type="project" value="GO_Central"/>
</dbReference>
<dbReference type="CDD" id="cd13403">
    <property type="entry name" value="MLTF-like"/>
    <property type="match status" value="1"/>
</dbReference>
<dbReference type="CDD" id="cd01009">
    <property type="entry name" value="PBP2_YfhD_N"/>
    <property type="match status" value="1"/>
</dbReference>
<dbReference type="FunFam" id="1.10.530.10:FF:000003">
    <property type="entry name" value="Membrane-bound lytic murein transglycosylase F"/>
    <property type="match status" value="1"/>
</dbReference>
<dbReference type="Gene3D" id="1.10.530.10">
    <property type="match status" value="1"/>
</dbReference>
<dbReference type="Gene3D" id="3.40.190.10">
    <property type="entry name" value="Periplasmic binding protein-like II"/>
    <property type="match status" value="2"/>
</dbReference>
<dbReference type="HAMAP" id="MF_02016">
    <property type="entry name" value="MltF"/>
    <property type="match status" value="1"/>
</dbReference>
<dbReference type="InterPro" id="IPR023346">
    <property type="entry name" value="Lysozyme-like_dom_sf"/>
</dbReference>
<dbReference type="InterPro" id="IPR023703">
    <property type="entry name" value="MltF"/>
</dbReference>
<dbReference type="InterPro" id="IPR001638">
    <property type="entry name" value="Solute-binding_3/MltF_N"/>
</dbReference>
<dbReference type="InterPro" id="IPR000189">
    <property type="entry name" value="Transglyc_AS"/>
</dbReference>
<dbReference type="InterPro" id="IPR008258">
    <property type="entry name" value="Transglycosylase_SLT_dom_1"/>
</dbReference>
<dbReference type="NCBIfam" id="NF008112">
    <property type="entry name" value="PRK10859.1"/>
    <property type="match status" value="1"/>
</dbReference>
<dbReference type="PANTHER" id="PTHR35936">
    <property type="entry name" value="MEMBRANE-BOUND LYTIC MUREIN TRANSGLYCOSYLASE F"/>
    <property type="match status" value="1"/>
</dbReference>
<dbReference type="PANTHER" id="PTHR35936:SF32">
    <property type="entry name" value="MEMBRANE-BOUND LYTIC MUREIN TRANSGLYCOSYLASE F"/>
    <property type="match status" value="1"/>
</dbReference>
<dbReference type="Pfam" id="PF00497">
    <property type="entry name" value="SBP_bac_3"/>
    <property type="match status" value="1"/>
</dbReference>
<dbReference type="Pfam" id="PF01464">
    <property type="entry name" value="SLT"/>
    <property type="match status" value="1"/>
</dbReference>
<dbReference type="SMART" id="SM00062">
    <property type="entry name" value="PBPb"/>
    <property type="match status" value="1"/>
</dbReference>
<dbReference type="SUPFAM" id="SSF53955">
    <property type="entry name" value="Lysozyme-like"/>
    <property type="match status" value="1"/>
</dbReference>
<dbReference type="SUPFAM" id="SSF53850">
    <property type="entry name" value="Periplasmic binding protein-like II"/>
    <property type="match status" value="1"/>
</dbReference>
<dbReference type="PROSITE" id="PS00922">
    <property type="entry name" value="TRANSGLYCOSYLASE"/>
    <property type="match status" value="1"/>
</dbReference>
<organism>
    <name type="scientific">Yersinia pestis</name>
    <dbReference type="NCBI Taxonomy" id="632"/>
    <lineage>
        <taxon>Bacteria</taxon>
        <taxon>Pseudomonadati</taxon>
        <taxon>Pseudomonadota</taxon>
        <taxon>Gammaproteobacteria</taxon>
        <taxon>Enterobacterales</taxon>
        <taxon>Yersiniaceae</taxon>
        <taxon>Yersinia</taxon>
    </lineage>
</organism>
<name>MLTF_YERPE</name>
<protein>
    <recommendedName>
        <fullName evidence="1">Membrane-bound lytic murein transglycosylase F</fullName>
        <ecNumber evidence="1">4.2.2.n1</ecNumber>
    </recommendedName>
    <alternativeName>
        <fullName evidence="1">Murein lyase F</fullName>
    </alternativeName>
</protein>
<reference key="1">
    <citation type="journal article" date="2001" name="Nature">
        <title>Genome sequence of Yersinia pestis, the causative agent of plague.</title>
        <authorList>
            <person name="Parkhill J."/>
            <person name="Wren B.W."/>
            <person name="Thomson N.R."/>
            <person name="Titball R.W."/>
            <person name="Holden M.T.G."/>
            <person name="Prentice M.B."/>
            <person name="Sebaihia M."/>
            <person name="James K.D."/>
            <person name="Churcher C.M."/>
            <person name="Mungall K.L."/>
            <person name="Baker S."/>
            <person name="Basham D."/>
            <person name="Bentley S.D."/>
            <person name="Brooks K."/>
            <person name="Cerdeno-Tarraga A.-M."/>
            <person name="Chillingworth T."/>
            <person name="Cronin A."/>
            <person name="Davies R.M."/>
            <person name="Davis P."/>
            <person name="Dougan G."/>
            <person name="Feltwell T."/>
            <person name="Hamlin N."/>
            <person name="Holroyd S."/>
            <person name="Jagels K."/>
            <person name="Karlyshev A.V."/>
            <person name="Leather S."/>
            <person name="Moule S."/>
            <person name="Oyston P.C.F."/>
            <person name="Quail M.A."/>
            <person name="Rutherford K.M."/>
            <person name="Simmonds M."/>
            <person name="Skelton J."/>
            <person name="Stevens K."/>
            <person name="Whitehead S."/>
            <person name="Barrell B.G."/>
        </authorList>
    </citation>
    <scope>NUCLEOTIDE SEQUENCE [LARGE SCALE GENOMIC DNA]</scope>
    <source>
        <strain>CO-92 / Biovar Orientalis</strain>
    </source>
</reference>
<reference key="2">
    <citation type="journal article" date="2002" name="J. Bacteriol.">
        <title>Genome sequence of Yersinia pestis KIM.</title>
        <authorList>
            <person name="Deng W."/>
            <person name="Burland V."/>
            <person name="Plunkett G. III"/>
            <person name="Boutin A."/>
            <person name="Mayhew G.F."/>
            <person name="Liss P."/>
            <person name="Perna N.T."/>
            <person name="Rose D.J."/>
            <person name="Mau B."/>
            <person name="Zhou S."/>
            <person name="Schwartz D.C."/>
            <person name="Fetherston J.D."/>
            <person name="Lindler L.E."/>
            <person name="Brubaker R.R."/>
            <person name="Plano G.V."/>
            <person name="Straley S.C."/>
            <person name="McDonough K.A."/>
            <person name="Nilles M.L."/>
            <person name="Matson J.S."/>
            <person name="Blattner F.R."/>
            <person name="Perry R.D."/>
        </authorList>
    </citation>
    <scope>NUCLEOTIDE SEQUENCE [LARGE SCALE GENOMIC DNA]</scope>
    <source>
        <strain>KIM10+ / Biovar Mediaevalis</strain>
    </source>
</reference>
<reference key="3">
    <citation type="journal article" date="2004" name="DNA Res.">
        <title>Complete genome sequence of Yersinia pestis strain 91001, an isolate avirulent to humans.</title>
        <authorList>
            <person name="Song Y."/>
            <person name="Tong Z."/>
            <person name="Wang J."/>
            <person name="Wang L."/>
            <person name="Guo Z."/>
            <person name="Han Y."/>
            <person name="Zhang J."/>
            <person name="Pei D."/>
            <person name="Zhou D."/>
            <person name="Qin H."/>
            <person name="Pang X."/>
            <person name="Han Y."/>
            <person name="Zhai J."/>
            <person name="Li M."/>
            <person name="Cui B."/>
            <person name="Qi Z."/>
            <person name="Jin L."/>
            <person name="Dai R."/>
            <person name="Chen F."/>
            <person name="Li S."/>
            <person name="Ye C."/>
            <person name="Du Z."/>
            <person name="Lin W."/>
            <person name="Wang J."/>
            <person name="Yu J."/>
            <person name="Yang H."/>
            <person name="Wang J."/>
            <person name="Huang P."/>
            <person name="Yang R."/>
        </authorList>
    </citation>
    <scope>NUCLEOTIDE SEQUENCE [LARGE SCALE GENOMIC DNA]</scope>
    <source>
        <strain>91001 / Biovar Mediaevalis</strain>
    </source>
</reference>
<keyword id="KW-0002">3D-structure</keyword>
<keyword id="KW-0998">Cell outer membrane</keyword>
<keyword id="KW-0961">Cell wall biogenesis/degradation</keyword>
<keyword id="KW-0456">Lyase</keyword>
<keyword id="KW-0472">Membrane</keyword>
<keyword id="KW-1185">Reference proteome</keyword>
<keyword id="KW-0732">Signal</keyword>
<comment type="function">
    <text evidence="1">Murein-degrading enzyme that degrades murein glycan strands and insoluble, high-molecular weight murein sacculi, with the concomitant formation of a 1,6-anhydromuramoyl product. Lytic transglycosylases (LTs) play an integral role in the metabolism of the peptidoglycan (PG) sacculus. Their lytic action creates space within the PG sacculus to allow for its expansion as well as for the insertion of various structures such as secretion systems and flagella.</text>
</comment>
<comment type="catalytic activity">
    <reaction evidence="1">
        <text>Exolytic cleavage of the (1-&gt;4)-beta-glycosidic linkage between N-acetylmuramic acid (MurNAc) and N-acetylglucosamine (GlcNAc) residues in peptidoglycan, from either the reducing or the non-reducing ends of the peptidoglycan chains, with concomitant formation of a 1,6-anhydrobond in the MurNAc residue.</text>
        <dbReference type="EC" id="4.2.2.n1"/>
    </reaction>
</comment>
<comment type="subcellular location">
    <subcellularLocation>
        <location>Cell outer membrane</location>
        <topology>Peripheral membrane protein</topology>
    </subcellularLocation>
    <text evidence="1">Attached to the inner leaflet of the outer membrane.</text>
</comment>
<comment type="domain">
    <text evidence="1">The N-terminal domain does not have lytic activity and probably modulates enzymatic activity. The C-terminal domain is the catalytic active domain.</text>
</comment>
<comment type="similarity">
    <text evidence="1">In the N-terminal section; belongs to the bacterial solute-binding protein 3 family.</text>
</comment>
<comment type="similarity">
    <text evidence="1">In the C-terminal section; belongs to the transglycosylase Slt family.</text>
</comment>
<comment type="sequence caution" evidence="2">
    <conflict type="erroneous initiation">
        <sequence resource="EMBL-CDS" id="AAM84882"/>
    </conflict>
</comment>
<gene>
    <name evidence="1" type="primary">mltF</name>
    <name type="ordered locus">YPO2922</name>
    <name type="ordered locus">y1308</name>
    <name type="ordered locus">YP_2535</name>
</gene>